<comment type="function">
    <text evidence="1">GTPase that plays an essential role in the late steps of ribosome biogenesis.</text>
</comment>
<comment type="subunit">
    <text evidence="1">Associates with the 50S ribosomal subunit.</text>
</comment>
<comment type="similarity">
    <text evidence="1">Belongs to the TRAFAC class TrmE-Era-EngA-EngB-Septin-like GTPase superfamily. EngA (Der) GTPase family.</text>
</comment>
<evidence type="ECO:0000255" key="1">
    <source>
        <dbReference type="HAMAP-Rule" id="MF_00195"/>
    </source>
</evidence>
<proteinExistence type="inferred from homology"/>
<accession>C6DBH0</accession>
<protein>
    <recommendedName>
        <fullName evidence="1">GTPase Der</fullName>
    </recommendedName>
    <alternativeName>
        <fullName evidence="1">GTP-binding protein EngA</fullName>
    </alternativeName>
</protein>
<gene>
    <name evidence="1" type="primary">der</name>
    <name type="synonym">engA</name>
    <name type="ordered locus">PC1_3010</name>
</gene>
<feature type="chain" id="PRO_1000204045" description="GTPase Der">
    <location>
        <begin position="1"/>
        <end position="495"/>
    </location>
</feature>
<feature type="domain" description="EngA-type G 1">
    <location>
        <begin position="3"/>
        <end position="166"/>
    </location>
</feature>
<feature type="domain" description="EngA-type G 2">
    <location>
        <begin position="208"/>
        <end position="381"/>
    </location>
</feature>
<feature type="domain" description="KH-like" evidence="1">
    <location>
        <begin position="382"/>
        <end position="466"/>
    </location>
</feature>
<feature type="binding site" evidence="1">
    <location>
        <begin position="9"/>
        <end position="16"/>
    </location>
    <ligand>
        <name>GTP</name>
        <dbReference type="ChEBI" id="CHEBI:37565"/>
        <label>1</label>
    </ligand>
</feature>
<feature type="binding site" evidence="1">
    <location>
        <begin position="56"/>
        <end position="60"/>
    </location>
    <ligand>
        <name>GTP</name>
        <dbReference type="ChEBI" id="CHEBI:37565"/>
        <label>1</label>
    </ligand>
</feature>
<feature type="binding site" evidence="1">
    <location>
        <begin position="118"/>
        <end position="121"/>
    </location>
    <ligand>
        <name>GTP</name>
        <dbReference type="ChEBI" id="CHEBI:37565"/>
        <label>1</label>
    </ligand>
</feature>
<feature type="binding site" evidence="1">
    <location>
        <begin position="214"/>
        <end position="221"/>
    </location>
    <ligand>
        <name>GTP</name>
        <dbReference type="ChEBI" id="CHEBI:37565"/>
        <label>2</label>
    </ligand>
</feature>
<feature type="binding site" evidence="1">
    <location>
        <begin position="261"/>
        <end position="265"/>
    </location>
    <ligand>
        <name>GTP</name>
        <dbReference type="ChEBI" id="CHEBI:37565"/>
        <label>2</label>
    </ligand>
</feature>
<feature type="binding site" evidence="1">
    <location>
        <begin position="326"/>
        <end position="329"/>
    </location>
    <ligand>
        <name>GTP</name>
        <dbReference type="ChEBI" id="CHEBI:37565"/>
        <label>2</label>
    </ligand>
</feature>
<reference key="1">
    <citation type="submission" date="2009-07" db="EMBL/GenBank/DDBJ databases">
        <title>Complete sequence of Pectobacterium carotovorum subsp. carotovorum PC1.</title>
        <authorList>
            <consortium name="US DOE Joint Genome Institute"/>
            <person name="Lucas S."/>
            <person name="Copeland A."/>
            <person name="Lapidus A."/>
            <person name="Glavina del Rio T."/>
            <person name="Tice H."/>
            <person name="Bruce D."/>
            <person name="Goodwin L."/>
            <person name="Pitluck S."/>
            <person name="Munk A.C."/>
            <person name="Brettin T."/>
            <person name="Detter J.C."/>
            <person name="Han C."/>
            <person name="Tapia R."/>
            <person name="Larimer F."/>
            <person name="Land M."/>
            <person name="Hauser L."/>
            <person name="Kyrpides N."/>
            <person name="Mikhailova N."/>
            <person name="Balakrishnan V."/>
            <person name="Glasner J."/>
            <person name="Perna N.T."/>
        </authorList>
    </citation>
    <scope>NUCLEOTIDE SEQUENCE [LARGE SCALE GENOMIC DNA]</scope>
    <source>
        <strain>PC1</strain>
    </source>
</reference>
<organism>
    <name type="scientific">Pectobacterium carotovorum subsp. carotovorum (strain PC1)</name>
    <dbReference type="NCBI Taxonomy" id="561230"/>
    <lineage>
        <taxon>Bacteria</taxon>
        <taxon>Pseudomonadati</taxon>
        <taxon>Pseudomonadota</taxon>
        <taxon>Gammaproteobacteria</taxon>
        <taxon>Enterobacterales</taxon>
        <taxon>Pectobacteriaceae</taxon>
        <taxon>Pectobacterium</taxon>
    </lineage>
</organism>
<keyword id="KW-0342">GTP-binding</keyword>
<keyword id="KW-0547">Nucleotide-binding</keyword>
<keyword id="KW-0677">Repeat</keyword>
<keyword id="KW-0690">Ribosome biogenesis</keyword>
<dbReference type="EMBL" id="CP001657">
    <property type="protein sequence ID" value="ACT14033.1"/>
    <property type="molecule type" value="Genomic_DNA"/>
</dbReference>
<dbReference type="RefSeq" id="WP_015841187.1">
    <property type="nucleotide sequence ID" value="NC_012917.1"/>
</dbReference>
<dbReference type="SMR" id="C6DBH0"/>
<dbReference type="STRING" id="561230.PC1_3010"/>
<dbReference type="GeneID" id="67793154"/>
<dbReference type="KEGG" id="pct:PC1_3010"/>
<dbReference type="eggNOG" id="COG1160">
    <property type="taxonomic scope" value="Bacteria"/>
</dbReference>
<dbReference type="HOGENOM" id="CLU_016077_6_2_6"/>
<dbReference type="OrthoDB" id="9805918at2"/>
<dbReference type="Proteomes" id="UP000002736">
    <property type="component" value="Chromosome"/>
</dbReference>
<dbReference type="GO" id="GO:0005525">
    <property type="term" value="F:GTP binding"/>
    <property type="evidence" value="ECO:0007669"/>
    <property type="project" value="UniProtKB-UniRule"/>
</dbReference>
<dbReference type="GO" id="GO:0043022">
    <property type="term" value="F:ribosome binding"/>
    <property type="evidence" value="ECO:0007669"/>
    <property type="project" value="TreeGrafter"/>
</dbReference>
<dbReference type="GO" id="GO:0042254">
    <property type="term" value="P:ribosome biogenesis"/>
    <property type="evidence" value="ECO:0007669"/>
    <property type="project" value="UniProtKB-KW"/>
</dbReference>
<dbReference type="CDD" id="cd01894">
    <property type="entry name" value="EngA1"/>
    <property type="match status" value="1"/>
</dbReference>
<dbReference type="CDD" id="cd01895">
    <property type="entry name" value="EngA2"/>
    <property type="match status" value="1"/>
</dbReference>
<dbReference type="FunFam" id="3.30.300.20:FF:000004">
    <property type="entry name" value="GTPase Der"/>
    <property type="match status" value="1"/>
</dbReference>
<dbReference type="FunFam" id="3.40.50.300:FF:000040">
    <property type="entry name" value="GTPase Der"/>
    <property type="match status" value="1"/>
</dbReference>
<dbReference type="FunFam" id="3.40.50.300:FF:000057">
    <property type="entry name" value="GTPase Der"/>
    <property type="match status" value="1"/>
</dbReference>
<dbReference type="Gene3D" id="3.30.300.20">
    <property type="match status" value="1"/>
</dbReference>
<dbReference type="Gene3D" id="3.40.50.300">
    <property type="entry name" value="P-loop containing nucleotide triphosphate hydrolases"/>
    <property type="match status" value="2"/>
</dbReference>
<dbReference type="HAMAP" id="MF_00195">
    <property type="entry name" value="GTPase_Der"/>
    <property type="match status" value="1"/>
</dbReference>
<dbReference type="InterPro" id="IPR031166">
    <property type="entry name" value="G_ENGA"/>
</dbReference>
<dbReference type="InterPro" id="IPR006073">
    <property type="entry name" value="GTP-bd"/>
</dbReference>
<dbReference type="InterPro" id="IPR016484">
    <property type="entry name" value="GTPase_Der"/>
</dbReference>
<dbReference type="InterPro" id="IPR032859">
    <property type="entry name" value="KH_dom-like"/>
</dbReference>
<dbReference type="InterPro" id="IPR015946">
    <property type="entry name" value="KH_dom-like_a/b"/>
</dbReference>
<dbReference type="InterPro" id="IPR027417">
    <property type="entry name" value="P-loop_NTPase"/>
</dbReference>
<dbReference type="InterPro" id="IPR005225">
    <property type="entry name" value="Small_GTP-bd"/>
</dbReference>
<dbReference type="NCBIfam" id="TIGR03594">
    <property type="entry name" value="GTPase_EngA"/>
    <property type="match status" value="1"/>
</dbReference>
<dbReference type="NCBIfam" id="TIGR00231">
    <property type="entry name" value="small_GTP"/>
    <property type="match status" value="2"/>
</dbReference>
<dbReference type="PANTHER" id="PTHR43834">
    <property type="entry name" value="GTPASE DER"/>
    <property type="match status" value="1"/>
</dbReference>
<dbReference type="PANTHER" id="PTHR43834:SF6">
    <property type="entry name" value="GTPASE DER"/>
    <property type="match status" value="1"/>
</dbReference>
<dbReference type="Pfam" id="PF14714">
    <property type="entry name" value="KH_dom-like"/>
    <property type="match status" value="1"/>
</dbReference>
<dbReference type="Pfam" id="PF01926">
    <property type="entry name" value="MMR_HSR1"/>
    <property type="match status" value="2"/>
</dbReference>
<dbReference type="PIRSF" id="PIRSF006485">
    <property type="entry name" value="GTP-binding_EngA"/>
    <property type="match status" value="1"/>
</dbReference>
<dbReference type="PRINTS" id="PR00326">
    <property type="entry name" value="GTP1OBG"/>
</dbReference>
<dbReference type="SUPFAM" id="SSF52540">
    <property type="entry name" value="P-loop containing nucleoside triphosphate hydrolases"/>
    <property type="match status" value="2"/>
</dbReference>
<dbReference type="PROSITE" id="PS51712">
    <property type="entry name" value="G_ENGA"/>
    <property type="match status" value="2"/>
</dbReference>
<name>DER_PECCP</name>
<sequence length="495" mass="55126">MIPVVALVGRPNVGKSTLFNRLTRTRDALVADFPGLTRDRKYGRAEVEGHEFIIVDTGGIDGTEDGVETRMAGQSLVAIEEADIVLFMVDARAGLMPADEGIAKHLRSREKTTVLVANKTDGLDPDMVTADFYSLGMGEVYPIAASHGRGVTSLLETVLLPFVQDEIEEPVELSEEEENAAYWAALEADEQASEEEAEDDFNPEDLPIKLAIVGRPNVGKSTLTNRILGEERVVVFDMPGTTRDSIYIPMVRDEREYVLIDTAGVRKRGKVTETVEKFSVIKTLQAIEDANVVLLVIDAREGISDQDLSLLGFILNSGRSLVIVVNKWDGLSQEVREQVKETLDLRLGFIDFARIHFISALHGSGVGNLFESVTEAYACATRRVSTAMLTRIMQMASDDHQPPLVRGRRVKLKYAHAGGYNPPIVVIHGNQVKDLPDSYKRYLMNYYRRSLDVMGTPIRIQFKEGENPFADKRNTLTPNQLRKRKRLMSHIKKGK</sequence>